<dbReference type="EMBL" id="CP000026">
    <property type="protein sequence ID" value="AAV77608.1"/>
    <property type="molecule type" value="Genomic_DNA"/>
</dbReference>
<dbReference type="RefSeq" id="WP_000873044.1">
    <property type="nucleotide sequence ID" value="NC_006511.1"/>
</dbReference>
<dbReference type="SMR" id="Q5PGW9"/>
<dbReference type="KEGG" id="spt:SPA1683"/>
<dbReference type="HOGENOM" id="CLU_057831_2_0_6"/>
<dbReference type="Proteomes" id="UP000008185">
    <property type="component" value="Chromosome"/>
</dbReference>
<dbReference type="FunFam" id="1.10.10.10:FF:000196">
    <property type="entry name" value="UPF0502 protein YceH"/>
    <property type="match status" value="1"/>
</dbReference>
<dbReference type="Gene3D" id="1.10.10.10">
    <property type="entry name" value="Winged helix-like DNA-binding domain superfamily/Winged helix DNA-binding domain"/>
    <property type="match status" value="2"/>
</dbReference>
<dbReference type="HAMAP" id="MF_01584">
    <property type="entry name" value="UPF0502"/>
    <property type="match status" value="1"/>
</dbReference>
<dbReference type="InterPro" id="IPR007432">
    <property type="entry name" value="DUF480"/>
</dbReference>
<dbReference type="InterPro" id="IPR036388">
    <property type="entry name" value="WH-like_DNA-bd_sf"/>
</dbReference>
<dbReference type="InterPro" id="IPR036390">
    <property type="entry name" value="WH_DNA-bd_sf"/>
</dbReference>
<dbReference type="NCBIfam" id="NF008413">
    <property type="entry name" value="PRK11239.1"/>
    <property type="match status" value="1"/>
</dbReference>
<dbReference type="PANTHER" id="PTHR38768">
    <property type="entry name" value="UPF0502 PROTEIN YCEH"/>
    <property type="match status" value="1"/>
</dbReference>
<dbReference type="PANTHER" id="PTHR38768:SF1">
    <property type="entry name" value="UPF0502 PROTEIN YCEH"/>
    <property type="match status" value="1"/>
</dbReference>
<dbReference type="Pfam" id="PF04337">
    <property type="entry name" value="DUF480"/>
    <property type="match status" value="1"/>
</dbReference>
<dbReference type="SUPFAM" id="SSF46785">
    <property type="entry name" value="Winged helix' DNA-binding domain"/>
    <property type="match status" value="2"/>
</dbReference>
<evidence type="ECO:0000255" key="1">
    <source>
        <dbReference type="HAMAP-Rule" id="MF_01584"/>
    </source>
</evidence>
<sequence>MKYELTATEARVIGCLLEKQVTTPEQYPLSVNGVVTACNQKTNREPVMNLTEQEVQEQLDNLVKRHFLRTVSGFGNRVTKYEQRFCNSEFGDLKLSAAEVALVTTLLLRGAQTPGELRSRASRMHEFSDMAEVESTLERLASREDGPYVVRLAREPGKRESRYIHLFCGDVDELSLQTSAPESASGDLQSRVEALESEVAELKQRLDSLLAHLGE</sequence>
<organism>
    <name type="scientific">Salmonella paratyphi A (strain ATCC 9150 / SARB42)</name>
    <dbReference type="NCBI Taxonomy" id="295319"/>
    <lineage>
        <taxon>Bacteria</taxon>
        <taxon>Pseudomonadati</taxon>
        <taxon>Pseudomonadota</taxon>
        <taxon>Gammaproteobacteria</taxon>
        <taxon>Enterobacterales</taxon>
        <taxon>Enterobacteriaceae</taxon>
        <taxon>Salmonella</taxon>
    </lineage>
</organism>
<gene>
    <name evidence="1" type="primary">yceH</name>
    <name type="ordered locus">SPA1683</name>
</gene>
<reference key="1">
    <citation type="journal article" date="2004" name="Nat. Genet.">
        <title>Comparison of genome degradation in Paratyphi A and Typhi, human-restricted serovars of Salmonella enterica that cause typhoid.</title>
        <authorList>
            <person name="McClelland M."/>
            <person name="Sanderson K.E."/>
            <person name="Clifton S.W."/>
            <person name="Latreille P."/>
            <person name="Porwollik S."/>
            <person name="Sabo A."/>
            <person name="Meyer R."/>
            <person name="Bieri T."/>
            <person name="Ozersky P."/>
            <person name="McLellan M."/>
            <person name="Harkins C.R."/>
            <person name="Wang C."/>
            <person name="Nguyen C."/>
            <person name="Berghoff A."/>
            <person name="Elliott G."/>
            <person name="Kohlberg S."/>
            <person name="Strong C."/>
            <person name="Du F."/>
            <person name="Carter J."/>
            <person name="Kremizki C."/>
            <person name="Layman D."/>
            <person name="Leonard S."/>
            <person name="Sun H."/>
            <person name="Fulton L."/>
            <person name="Nash W."/>
            <person name="Miner T."/>
            <person name="Minx P."/>
            <person name="Delehaunty K."/>
            <person name="Fronick C."/>
            <person name="Magrini V."/>
            <person name="Nhan M."/>
            <person name="Warren W."/>
            <person name="Florea L."/>
            <person name="Spieth J."/>
            <person name="Wilson R.K."/>
        </authorList>
    </citation>
    <scope>NUCLEOTIDE SEQUENCE [LARGE SCALE GENOMIC DNA]</scope>
    <source>
        <strain>ATCC 9150 / SARB42</strain>
    </source>
</reference>
<proteinExistence type="inferred from homology"/>
<protein>
    <recommendedName>
        <fullName evidence="1">UPF0502 protein YceH</fullName>
    </recommendedName>
</protein>
<name>YCEH_SALPA</name>
<feature type="chain" id="PRO_0000309420" description="UPF0502 protein YceH">
    <location>
        <begin position="1"/>
        <end position="215"/>
    </location>
</feature>
<accession>Q5PGW9</accession>
<comment type="similarity">
    <text evidence="1">Belongs to the UPF0502 family.</text>
</comment>